<name>COAD_RHOE4</name>
<reference key="1">
    <citation type="submission" date="2005-03" db="EMBL/GenBank/DDBJ databases">
        <title>Comparison of the complete genome sequences of Rhodococcus erythropolis PR4 and Rhodococcus opacus B4.</title>
        <authorList>
            <person name="Takarada H."/>
            <person name="Sekine M."/>
            <person name="Hosoyama A."/>
            <person name="Yamada R."/>
            <person name="Fujisawa T."/>
            <person name="Omata S."/>
            <person name="Shimizu A."/>
            <person name="Tsukatani N."/>
            <person name="Tanikawa S."/>
            <person name="Fujita N."/>
            <person name="Harayama S."/>
        </authorList>
    </citation>
    <scope>NUCLEOTIDE SEQUENCE [LARGE SCALE GENOMIC DNA]</scope>
    <source>
        <strain>PR4 / NBRC 100887</strain>
    </source>
</reference>
<feature type="chain" id="PRO_1000203432" description="Phosphopantetheine adenylyltransferase">
    <location>
        <begin position="1"/>
        <end position="164"/>
    </location>
</feature>
<feature type="binding site" evidence="1">
    <location>
        <begin position="9"/>
        <end position="10"/>
    </location>
    <ligand>
        <name>ATP</name>
        <dbReference type="ChEBI" id="CHEBI:30616"/>
    </ligand>
</feature>
<feature type="binding site" evidence="1">
    <location>
        <position position="9"/>
    </location>
    <ligand>
        <name>substrate</name>
    </ligand>
</feature>
<feature type="binding site" evidence="1">
    <location>
        <position position="17"/>
    </location>
    <ligand>
        <name>ATP</name>
        <dbReference type="ChEBI" id="CHEBI:30616"/>
    </ligand>
</feature>
<feature type="binding site" evidence="1">
    <location>
        <position position="41"/>
    </location>
    <ligand>
        <name>substrate</name>
    </ligand>
</feature>
<feature type="binding site" evidence="1">
    <location>
        <position position="73"/>
    </location>
    <ligand>
        <name>substrate</name>
    </ligand>
</feature>
<feature type="binding site" evidence="1">
    <location>
        <position position="87"/>
    </location>
    <ligand>
        <name>substrate</name>
    </ligand>
</feature>
<feature type="binding site" evidence="1">
    <location>
        <begin position="88"/>
        <end position="90"/>
    </location>
    <ligand>
        <name>ATP</name>
        <dbReference type="ChEBI" id="CHEBI:30616"/>
    </ligand>
</feature>
<feature type="binding site" evidence="1">
    <location>
        <position position="98"/>
    </location>
    <ligand>
        <name>ATP</name>
        <dbReference type="ChEBI" id="CHEBI:30616"/>
    </ligand>
</feature>
<feature type="binding site" evidence="1">
    <location>
        <begin position="122"/>
        <end position="128"/>
    </location>
    <ligand>
        <name>ATP</name>
        <dbReference type="ChEBI" id="CHEBI:30616"/>
    </ligand>
</feature>
<feature type="site" description="Transition state stabilizer" evidence="1">
    <location>
        <position position="17"/>
    </location>
</feature>
<proteinExistence type="inferred from homology"/>
<gene>
    <name evidence="1" type="primary">coaD</name>
    <name type="ordered locus">RER_24270</name>
</gene>
<protein>
    <recommendedName>
        <fullName evidence="1">Phosphopantetheine adenylyltransferase</fullName>
        <ecNumber evidence="1">2.7.7.3</ecNumber>
    </recommendedName>
    <alternativeName>
        <fullName evidence="1">Dephospho-CoA pyrophosphorylase</fullName>
    </alternativeName>
    <alternativeName>
        <fullName evidence="1">Pantetheine-phosphate adenylyltransferase</fullName>
        <shortName evidence="1">PPAT</shortName>
    </alternativeName>
</protein>
<comment type="function">
    <text evidence="1">Reversibly transfers an adenylyl group from ATP to 4'-phosphopantetheine, yielding dephospho-CoA (dPCoA) and pyrophosphate.</text>
</comment>
<comment type="catalytic activity">
    <reaction evidence="1">
        <text>(R)-4'-phosphopantetheine + ATP + H(+) = 3'-dephospho-CoA + diphosphate</text>
        <dbReference type="Rhea" id="RHEA:19801"/>
        <dbReference type="ChEBI" id="CHEBI:15378"/>
        <dbReference type="ChEBI" id="CHEBI:30616"/>
        <dbReference type="ChEBI" id="CHEBI:33019"/>
        <dbReference type="ChEBI" id="CHEBI:57328"/>
        <dbReference type="ChEBI" id="CHEBI:61723"/>
        <dbReference type="EC" id="2.7.7.3"/>
    </reaction>
</comment>
<comment type="cofactor">
    <cofactor evidence="1">
        <name>Mg(2+)</name>
        <dbReference type="ChEBI" id="CHEBI:18420"/>
    </cofactor>
</comment>
<comment type="pathway">
    <text evidence="1">Cofactor biosynthesis; coenzyme A biosynthesis; CoA from (R)-pantothenate: step 4/5.</text>
</comment>
<comment type="subunit">
    <text evidence="1">Homohexamer.</text>
</comment>
<comment type="subcellular location">
    <subcellularLocation>
        <location evidence="1">Cytoplasm</location>
    </subcellularLocation>
</comment>
<comment type="similarity">
    <text evidence="1">Belongs to the bacterial CoaD family.</text>
</comment>
<evidence type="ECO:0000255" key="1">
    <source>
        <dbReference type="HAMAP-Rule" id="MF_00151"/>
    </source>
</evidence>
<keyword id="KW-0067">ATP-binding</keyword>
<keyword id="KW-0173">Coenzyme A biosynthesis</keyword>
<keyword id="KW-0963">Cytoplasm</keyword>
<keyword id="KW-0460">Magnesium</keyword>
<keyword id="KW-0547">Nucleotide-binding</keyword>
<keyword id="KW-0548">Nucleotidyltransferase</keyword>
<keyword id="KW-0808">Transferase</keyword>
<organism>
    <name type="scientific">Rhodococcus erythropolis (strain PR4 / NBRC 100887)</name>
    <dbReference type="NCBI Taxonomy" id="234621"/>
    <lineage>
        <taxon>Bacteria</taxon>
        <taxon>Bacillati</taxon>
        <taxon>Actinomycetota</taxon>
        <taxon>Actinomycetes</taxon>
        <taxon>Mycobacteriales</taxon>
        <taxon>Nocardiaceae</taxon>
        <taxon>Rhodococcus</taxon>
        <taxon>Rhodococcus erythropolis group</taxon>
    </lineage>
</organism>
<dbReference type="EC" id="2.7.7.3" evidence="1"/>
<dbReference type="EMBL" id="AP008957">
    <property type="protein sequence ID" value="BAH33135.1"/>
    <property type="molecule type" value="Genomic_DNA"/>
</dbReference>
<dbReference type="RefSeq" id="WP_003942776.1">
    <property type="nucleotide sequence ID" value="NC_012490.1"/>
</dbReference>
<dbReference type="SMR" id="C0ZXQ0"/>
<dbReference type="GeneID" id="93803422"/>
<dbReference type="KEGG" id="rer:RER_24270"/>
<dbReference type="eggNOG" id="COG0669">
    <property type="taxonomic scope" value="Bacteria"/>
</dbReference>
<dbReference type="HOGENOM" id="CLU_100149_1_0_11"/>
<dbReference type="UniPathway" id="UPA00241">
    <property type="reaction ID" value="UER00355"/>
</dbReference>
<dbReference type="Proteomes" id="UP000002204">
    <property type="component" value="Chromosome"/>
</dbReference>
<dbReference type="GO" id="GO:0005737">
    <property type="term" value="C:cytoplasm"/>
    <property type="evidence" value="ECO:0007669"/>
    <property type="project" value="UniProtKB-SubCell"/>
</dbReference>
<dbReference type="GO" id="GO:0005524">
    <property type="term" value="F:ATP binding"/>
    <property type="evidence" value="ECO:0007669"/>
    <property type="project" value="UniProtKB-KW"/>
</dbReference>
<dbReference type="GO" id="GO:0004595">
    <property type="term" value="F:pantetheine-phosphate adenylyltransferase activity"/>
    <property type="evidence" value="ECO:0007669"/>
    <property type="project" value="UniProtKB-UniRule"/>
</dbReference>
<dbReference type="GO" id="GO:0015937">
    <property type="term" value="P:coenzyme A biosynthetic process"/>
    <property type="evidence" value="ECO:0007669"/>
    <property type="project" value="UniProtKB-UniRule"/>
</dbReference>
<dbReference type="CDD" id="cd02163">
    <property type="entry name" value="PPAT"/>
    <property type="match status" value="1"/>
</dbReference>
<dbReference type="FunFam" id="3.40.50.620:FF:000012">
    <property type="entry name" value="Phosphopantetheine adenylyltransferase"/>
    <property type="match status" value="1"/>
</dbReference>
<dbReference type="Gene3D" id="3.40.50.620">
    <property type="entry name" value="HUPs"/>
    <property type="match status" value="1"/>
</dbReference>
<dbReference type="HAMAP" id="MF_00151">
    <property type="entry name" value="PPAT_bact"/>
    <property type="match status" value="1"/>
</dbReference>
<dbReference type="InterPro" id="IPR004821">
    <property type="entry name" value="Cyt_trans-like"/>
</dbReference>
<dbReference type="InterPro" id="IPR001980">
    <property type="entry name" value="PPAT"/>
</dbReference>
<dbReference type="InterPro" id="IPR014729">
    <property type="entry name" value="Rossmann-like_a/b/a_fold"/>
</dbReference>
<dbReference type="NCBIfam" id="TIGR01510">
    <property type="entry name" value="coaD_prev_kdtB"/>
    <property type="match status" value="1"/>
</dbReference>
<dbReference type="NCBIfam" id="TIGR00125">
    <property type="entry name" value="cyt_tran_rel"/>
    <property type="match status" value="1"/>
</dbReference>
<dbReference type="PANTHER" id="PTHR21342">
    <property type="entry name" value="PHOSPHOPANTETHEINE ADENYLYLTRANSFERASE"/>
    <property type="match status" value="1"/>
</dbReference>
<dbReference type="PANTHER" id="PTHR21342:SF1">
    <property type="entry name" value="PHOSPHOPANTETHEINE ADENYLYLTRANSFERASE"/>
    <property type="match status" value="1"/>
</dbReference>
<dbReference type="Pfam" id="PF01467">
    <property type="entry name" value="CTP_transf_like"/>
    <property type="match status" value="1"/>
</dbReference>
<dbReference type="PRINTS" id="PR01020">
    <property type="entry name" value="LPSBIOSNTHSS"/>
</dbReference>
<dbReference type="SUPFAM" id="SSF52374">
    <property type="entry name" value="Nucleotidylyl transferase"/>
    <property type="match status" value="1"/>
</dbReference>
<accession>C0ZXQ0</accession>
<sequence length="164" mass="17860">MTGAVCPGSFDPVTNGHLDVIGRVAAQFDEVVVTVLINKSKRGMFTIDERIEMLEDATSHLPNVRVTSWHGLLVDYAKQEGLSAIVKGLRGANDFDYELQMAQMNQKLTGVDTLFVATNPTYSYLSSSLVKEVATFGGDVSDMLPAKVHSRLLARIAERAAENS</sequence>